<sequence>MLDIRVVRQDPEGVARGLARRGLAAGLEHFLELDARRRNLLVEVEGLKNRRNQVSAEVARLKKSGQDATELIASMREVGERIKELDEKVRAVEEELRQEMLKLPNIPHASVPDGLSDADNKPVRHWGELPRFKFEPRPHWEIAENLGIVDFERGGKVAGARFVFYRGAGARLERALINFMLDLHTIKHGYTEIFPPYMVNSASMLGTGQLPKFAEDMFHVEGTDYYLIPTAEVPVTNLYRGEILPGEKLPIYHVAYSACFRAEAGAAGRDTRGLIRQHQFNKVELVKFTRPEDSYEELEKLTRDAEEVLQLLGLPYRVVALCAGDLGFSAAKTYDLEVWMPGTACYREISSCSNFEDFQARRADIRFRPGPKEKPRLVHTLNGSGVAVGRTVAAILENYQQEDGTVLIPPALKPYMGGLTSIQPEQD</sequence>
<keyword id="KW-0030">Aminoacyl-tRNA synthetase</keyword>
<keyword id="KW-0067">ATP-binding</keyword>
<keyword id="KW-0963">Cytoplasm</keyword>
<keyword id="KW-0436">Ligase</keyword>
<keyword id="KW-0547">Nucleotide-binding</keyword>
<keyword id="KW-0648">Protein biosynthesis</keyword>
<proteinExistence type="inferred from homology"/>
<name>SYS_MOOTA</name>
<reference key="1">
    <citation type="journal article" date="2008" name="Environ. Microbiol.">
        <title>The complete genome sequence of Moorella thermoacetica (f. Clostridium thermoaceticum).</title>
        <authorList>
            <person name="Pierce E."/>
            <person name="Xie G."/>
            <person name="Barabote R.D."/>
            <person name="Saunders E."/>
            <person name="Han C.S."/>
            <person name="Detter J.C."/>
            <person name="Richardson P."/>
            <person name="Brettin T.S."/>
            <person name="Das A."/>
            <person name="Ljungdahl L.G."/>
            <person name="Ragsdale S.W."/>
        </authorList>
    </citation>
    <scope>NUCLEOTIDE SEQUENCE [LARGE SCALE GENOMIC DNA]</scope>
    <source>
        <strain>ATCC 39073 / JCM 9320</strain>
    </source>
</reference>
<protein>
    <recommendedName>
        <fullName evidence="1">Serine--tRNA ligase</fullName>
        <ecNumber evidence="1">6.1.1.11</ecNumber>
    </recommendedName>
    <alternativeName>
        <fullName evidence="1">Seryl-tRNA synthetase</fullName>
        <shortName evidence="1">SerRS</shortName>
    </alternativeName>
    <alternativeName>
        <fullName evidence="1">Seryl-tRNA(Ser/Sec) synthetase</fullName>
    </alternativeName>
</protein>
<dbReference type="EC" id="6.1.1.11" evidence="1"/>
<dbReference type="EMBL" id="CP000232">
    <property type="protein sequence ID" value="ABC18361.1"/>
    <property type="molecule type" value="Genomic_DNA"/>
</dbReference>
<dbReference type="RefSeq" id="YP_428904.1">
    <property type="nucleotide sequence ID" value="NC_007644.1"/>
</dbReference>
<dbReference type="SMR" id="Q2RMH8"/>
<dbReference type="STRING" id="264732.Moth_0021"/>
<dbReference type="EnsemblBacteria" id="ABC18361">
    <property type="protein sequence ID" value="ABC18361"/>
    <property type="gene ID" value="Moth_0021"/>
</dbReference>
<dbReference type="KEGG" id="mta:Moth_0021"/>
<dbReference type="PATRIC" id="fig|264732.11.peg.22"/>
<dbReference type="eggNOG" id="COG0172">
    <property type="taxonomic scope" value="Bacteria"/>
</dbReference>
<dbReference type="HOGENOM" id="CLU_023797_1_1_9"/>
<dbReference type="OrthoDB" id="9804647at2"/>
<dbReference type="UniPathway" id="UPA00906">
    <property type="reaction ID" value="UER00895"/>
</dbReference>
<dbReference type="GO" id="GO:0005737">
    <property type="term" value="C:cytoplasm"/>
    <property type="evidence" value="ECO:0007669"/>
    <property type="project" value="UniProtKB-SubCell"/>
</dbReference>
<dbReference type="GO" id="GO:0005524">
    <property type="term" value="F:ATP binding"/>
    <property type="evidence" value="ECO:0007669"/>
    <property type="project" value="UniProtKB-UniRule"/>
</dbReference>
<dbReference type="GO" id="GO:0140096">
    <property type="term" value="F:catalytic activity, acting on a protein"/>
    <property type="evidence" value="ECO:0007669"/>
    <property type="project" value="UniProtKB-ARBA"/>
</dbReference>
<dbReference type="GO" id="GO:0004828">
    <property type="term" value="F:serine-tRNA ligase activity"/>
    <property type="evidence" value="ECO:0007669"/>
    <property type="project" value="UniProtKB-UniRule"/>
</dbReference>
<dbReference type="GO" id="GO:0016740">
    <property type="term" value="F:transferase activity"/>
    <property type="evidence" value="ECO:0007669"/>
    <property type="project" value="UniProtKB-ARBA"/>
</dbReference>
<dbReference type="GO" id="GO:0016260">
    <property type="term" value="P:selenocysteine biosynthetic process"/>
    <property type="evidence" value="ECO:0007669"/>
    <property type="project" value="UniProtKB-UniRule"/>
</dbReference>
<dbReference type="GO" id="GO:0006434">
    <property type="term" value="P:seryl-tRNA aminoacylation"/>
    <property type="evidence" value="ECO:0007669"/>
    <property type="project" value="UniProtKB-UniRule"/>
</dbReference>
<dbReference type="CDD" id="cd00770">
    <property type="entry name" value="SerRS_core"/>
    <property type="match status" value="1"/>
</dbReference>
<dbReference type="Gene3D" id="3.30.930.10">
    <property type="entry name" value="Bira Bifunctional Protein, Domain 2"/>
    <property type="match status" value="1"/>
</dbReference>
<dbReference type="Gene3D" id="1.10.287.40">
    <property type="entry name" value="Serine-tRNA synthetase, tRNA binding domain"/>
    <property type="match status" value="1"/>
</dbReference>
<dbReference type="HAMAP" id="MF_00176">
    <property type="entry name" value="Ser_tRNA_synth_type1"/>
    <property type="match status" value="1"/>
</dbReference>
<dbReference type="InterPro" id="IPR002314">
    <property type="entry name" value="aa-tRNA-synt_IIb"/>
</dbReference>
<dbReference type="InterPro" id="IPR006195">
    <property type="entry name" value="aa-tRNA-synth_II"/>
</dbReference>
<dbReference type="InterPro" id="IPR045864">
    <property type="entry name" value="aa-tRNA-synth_II/BPL/LPL"/>
</dbReference>
<dbReference type="InterPro" id="IPR002317">
    <property type="entry name" value="Ser-tRNA-ligase_type_1"/>
</dbReference>
<dbReference type="InterPro" id="IPR015866">
    <property type="entry name" value="Ser-tRNA-synth_1_N"/>
</dbReference>
<dbReference type="InterPro" id="IPR042103">
    <property type="entry name" value="SerRS_1_N_sf"/>
</dbReference>
<dbReference type="InterPro" id="IPR033729">
    <property type="entry name" value="SerRS_core"/>
</dbReference>
<dbReference type="InterPro" id="IPR010978">
    <property type="entry name" value="tRNA-bd_arm"/>
</dbReference>
<dbReference type="NCBIfam" id="TIGR00414">
    <property type="entry name" value="serS"/>
    <property type="match status" value="1"/>
</dbReference>
<dbReference type="PANTHER" id="PTHR43697:SF1">
    <property type="entry name" value="SERINE--TRNA LIGASE"/>
    <property type="match status" value="1"/>
</dbReference>
<dbReference type="PANTHER" id="PTHR43697">
    <property type="entry name" value="SERYL-TRNA SYNTHETASE"/>
    <property type="match status" value="1"/>
</dbReference>
<dbReference type="Pfam" id="PF02403">
    <property type="entry name" value="Seryl_tRNA_N"/>
    <property type="match status" value="1"/>
</dbReference>
<dbReference type="Pfam" id="PF00587">
    <property type="entry name" value="tRNA-synt_2b"/>
    <property type="match status" value="1"/>
</dbReference>
<dbReference type="PIRSF" id="PIRSF001529">
    <property type="entry name" value="Ser-tRNA-synth_IIa"/>
    <property type="match status" value="1"/>
</dbReference>
<dbReference type="PRINTS" id="PR00981">
    <property type="entry name" value="TRNASYNTHSER"/>
</dbReference>
<dbReference type="SUPFAM" id="SSF55681">
    <property type="entry name" value="Class II aaRS and biotin synthetases"/>
    <property type="match status" value="1"/>
</dbReference>
<dbReference type="SUPFAM" id="SSF46589">
    <property type="entry name" value="tRNA-binding arm"/>
    <property type="match status" value="1"/>
</dbReference>
<dbReference type="PROSITE" id="PS50862">
    <property type="entry name" value="AA_TRNA_LIGASE_II"/>
    <property type="match status" value="1"/>
</dbReference>
<gene>
    <name evidence="1" type="primary">serS</name>
    <name type="ordered locus">Moth_0021</name>
</gene>
<feature type="chain" id="PRO_1000019733" description="Serine--tRNA ligase">
    <location>
        <begin position="1"/>
        <end position="427"/>
    </location>
</feature>
<feature type="binding site" evidence="1">
    <location>
        <begin position="230"/>
        <end position="232"/>
    </location>
    <ligand>
        <name>L-serine</name>
        <dbReference type="ChEBI" id="CHEBI:33384"/>
    </ligand>
</feature>
<feature type="binding site" evidence="1">
    <location>
        <begin position="261"/>
        <end position="263"/>
    </location>
    <ligand>
        <name>ATP</name>
        <dbReference type="ChEBI" id="CHEBI:30616"/>
    </ligand>
</feature>
<feature type="binding site" evidence="1">
    <location>
        <position position="284"/>
    </location>
    <ligand>
        <name>L-serine</name>
        <dbReference type="ChEBI" id="CHEBI:33384"/>
    </ligand>
</feature>
<feature type="binding site" evidence="1">
    <location>
        <begin position="348"/>
        <end position="351"/>
    </location>
    <ligand>
        <name>ATP</name>
        <dbReference type="ChEBI" id="CHEBI:30616"/>
    </ligand>
</feature>
<feature type="binding site" evidence="1">
    <location>
        <position position="384"/>
    </location>
    <ligand>
        <name>L-serine</name>
        <dbReference type="ChEBI" id="CHEBI:33384"/>
    </ligand>
</feature>
<evidence type="ECO:0000255" key="1">
    <source>
        <dbReference type="HAMAP-Rule" id="MF_00176"/>
    </source>
</evidence>
<accession>Q2RMH8</accession>
<comment type="function">
    <text evidence="1">Catalyzes the attachment of serine to tRNA(Ser). Is also able to aminoacylate tRNA(Sec) with serine, to form the misacylated tRNA L-seryl-tRNA(Sec), which will be further converted into selenocysteinyl-tRNA(Sec).</text>
</comment>
<comment type="catalytic activity">
    <reaction evidence="1">
        <text>tRNA(Ser) + L-serine + ATP = L-seryl-tRNA(Ser) + AMP + diphosphate + H(+)</text>
        <dbReference type="Rhea" id="RHEA:12292"/>
        <dbReference type="Rhea" id="RHEA-COMP:9669"/>
        <dbReference type="Rhea" id="RHEA-COMP:9703"/>
        <dbReference type="ChEBI" id="CHEBI:15378"/>
        <dbReference type="ChEBI" id="CHEBI:30616"/>
        <dbReference type="ChEBI" id="CHEBI:33019"/>
        <dbReference type="ChEBI" id="CHEBI:33384"/>
        <dbReference type="ChEBI" id="CHEBI:78442"/>
        <dbReference type="ChEBI" id="CHEBI:78533"/>
        <dbReference type="ChEBI" id="CHEBI:456215"/>
        <dbReference type="EC" id="6.1.1.11"/>
    </reaction>
</comment>
<comment type="catalytic activity">
    <reaction evidence="1">
        <text>tRNA(Sec) + L-serine + ATP = L-seryl-tRNA(Sec) + AMP + diphosphate + H(+)</text>
        <dbReference type="Rhea" id="RHEA:42580"/>
        <dbReference type="Rhea" id="RHEA-COMP:9742"/>
        <dbReference type="Rhea" id="RHEA-COMP:10128"/>
        <dbReference type="ChEBI" id="CHEBI:15378"/>
        <dbReference type="ChEBI" id="CHEBI:30616"/>
        <dbReference type="ChEBI" id="CHEBI:33019"/>
        <dbReference type="ChEBI" id="CHEBI:33384"/>
        <dbReference type="ChEBI" id="CHEBI:78442"/>
        <dbReference type="ChEBI" id="CHEBI:78533"/>
        <dbReference type="ChEBI" id="CHEBI:456215"/>
        <dbReference type="EC" id="6.1.1.11"/>
    </reaction>
</comment>
<comment type="pathway">
    <text evidence="1">Aminoacyl-tRNA biosynthesis; selenocysteinyl-tRNA(Sec) biosynthesis; L-seryl-tRNA(Sec) from L-serine and tRNA(Sec): step 1/1.</text>
</comment>
<comment type="subunit">
    <text evidence="1">Homodimer. The tRNA molecule binds across the dimer.</text>
</comment>
<comment type="subcellular location">
    <subcellularLocation>
        <location evidence="1">Cytoplasm</location>
    </subcellularLocation>
</comment>
<comment type="domain">
    <text evidence="1">Consists of two distinct domains, a catalytic core and a N-terminal extension that is involved in tRNA binding.</text>
</comment>
<comment type="similarity">
    <text evidence="1">Belongs to the class-II aminoacyl-tRNA synthetase family. Type-1 seryl-tRNA synthetase subfamily.</text>
</comment>
<organism>
    <name type="scientific">Moorella thermoacetica (strain ATCC 39073 / JCM 9320)</name>
    <dbReference type="NCBI Taxonomy" id="264732"/>
    <lineage>
        <taxon>Bacteria</taxon>
        <taxon>Bacillati</taxon>
        <taxon>Bacillota</taxon>
        <taxon>Clostridia</taxon>
        <taxon>Moorellales</taxon>
        <taxon>Moorellaceae</taxon>
        <taxon>Moorella</taxon>
    </lineage>
</organism>